<organism>
    <name type="scientific">Monkeypox virus</name>
    <dbReference type="NCBI Taxonomy" id="10244"/>
    <lineage>
        <taxon>Viruses</taxon>
        <taxon>Varidnaviria</taxon>
        <taxon>Bamfordvirae</taxon>
        <taxon>Nucleocytoviricota</taxon>
        <taxon>Pokkesviricetes</taxon>
        <taxon>Chitovirales</taxon>
        <taxon>Poxviridae</taxon>
        <taxon>Chordopoxvirinae</taxon>
        <taxon>Orthopoxvirus</taxon>
    </lineage>
</organism>
<accession>A0A7H0DN23</accession>
<comment type="induction">
    <text evidence="1">Expressed in the early phase of the viral replicative cycle.</text>
</comment>
<comment type="similarity">
    <text evidence="2">Belongs to the orthopoxvirus OPG050 family.</text>
</comment>
<dbReference type="EMBL" id="MT903340">
    <property type="protein sequence ID" value="QNP12906.1"/>
    <property type="molecule type" value="Genomic_DNA"/>
</dbReference>
<dbReference type="RefSeq" id="YP_010377033.1">
    <property type="nucleotide sequence ID" value="NC_063383.1"/>
</dbReference>
<dbReference type="GeneID" id="72551446"/>
<dbReference type="Proteomes" id="UP000516359">
    <property type="component" value="Genome"/>
</dbReference>
<dbReference type="InterPro" id="IPR009521">
    <property type="entry name" value="Orthopox_F6"/>
</dbReference>
<dbReference type="Pfam" id="PF06601">
    <property type="entry name" value="Orthopox_F6"/>
    <property type="match status" value="1"/>
</dbReference>
<reference key="1">
    <citation type="journal article" date="2022" name="J. Infect. Dis.">
        <title>Exportation of Monkeypox virus from the African continent.</title>
        <authorList>
            <person name="Mauldin M.R."/>
            <person name="McCollum A.M."/>
            <person name="Nakazawa Y.J."/>
            <person name="Mandra A."/>
            <person name="Whitehouse E.R."/>
            <person name="Davidson W."/>
            <person name="Zhao H."/>
            <person name="Gao J."/>
            <person name="Li Y."/>
            <person name="Doty J."/>
            <person name="Yinka-Ogunleye A."/>
            <person name="Akinpelu A."/>
            <person name="Aruna O."/>
            <person name="Naidoo D."/>
            <person name="Lewandowski K."/>
            <person name="Afrough B."/>
            <person name="Graham V."/>
            <person name="Aarons E."/>
            <person name="Hewson R."/>
            <person name="Vipond R."/>
            <person name="Dunning J."/>
            <person name="Chand M."/>
            <person name="Brown C."/>
            <person name="Cohen-Gihon I."/>
            <person name="Erez N."/>
            <person name="Shifman O."/>
            <person name="Israeli O."/>
            <person name="Sharon M."/>
            <person name="Schwartz E."/>
            <person name="Beth-Din A."/>
            <person name="Zvi A."/>
            <person name="Mak T.M."/>
            <person name="Ng Y.K."/>
            <person name="Cui L."/>
            <person name="Lin R.T.P."/>
            <person name="Olson V.A."/>
            <person name="Brooks T."/>
            <person name="Paran N."/>
            <person name="Ihekweazu C."/>
            <person name="Reynolds M.G."/>
        </authorList>
    </citation>
    <scope>NUCLEOTIDE SEQUENCE [LARGE SCALE GENOMIC DNA]</scope>
    <source>
        <strain>MPXV-M5312_HM12_Rivers</strain>
    </source>
</reference>
<protein>
    <recommendedName>
        <fullName>Protein OPG050</fullName>
    </recommendedName>
    <alternativeName>
        <fullName>Protein F6</fullName>
    </alternativeName>
</protein>
<evidence type="ECO:0000250" key="1">
    <source>
        <dbReference type="UniProtKB" id="P68603"/>
    </source>
</evidence>
<evidence type="ECO:0000305" key="2"/>
<organismHost>
    <name type="scientific">Cynomys gunnisoni</name>
    <name type="common">Gunnison's prairie dog</name>
    <name type="synonym">Spermophilus gunnisoni</name>
    <dbReference type="NCBI Taxonomy" id="45479"/>
</organismHost>
<organismHost>
    <name type="scientific">Cynomys leucurus</name>
    <name type="common">White-tailed prairie dog</name>
    <dbReference type="NCBI Taxonomy" id="99825"/>
</organismHost>
<organismHost>
    <name type="scientific">Cynomys ludovicianus</name>
    <name type="common">Black-tailed prairie dog</name>
    <dbReference type="NCBI Taxonomy" id="45480"/>
</organismHost>
<organismHost>
    <name type="scientific">Cynomys mexicanus</name>
    <name type="common">Mexican prairie dog</name>
    <dbReference type="NCBI Taxonomy" id="99826"/>
</organismHost>
<organismHost>
    <name type="scientific">Cynomys parvidens</name>
    <name type="common">Utah prairie dog</name>
    <dbReference type="NCBI Taxonomy" id="99827"/>
</organismHost>
<organismHost>
    <name type="scientific">Gliridae</name>
    <name type="common">dormice</name>
    <dbReference type="NCBI Taxonomy" id="30650"/>
</organismHost>
<organismHost>
    <name type="scientific">Heliosciurus ruwenzorii</name>
    <name type="common">Ruwenzori sun squirrel</name>
    <dbReference type="NCBI Taxonomy" id="226685"/>
</organismHost>
<organismHost>
    <name type="scientific">Homo sapiens</name>
    <name type="common">Human</name>
    <dbReference type="NCBI Taxonomy" id="9606"/>
</organismHost>
<organismHost>
    <name type="scientific">Mus musculus</name>
    <name type="common">Mouse</name>
    <dbReference type="NCBI Taxonomy" id="10090"/>
</organismHost>
<name>PG050_MONPV</name>
<gene>
    <name type="primary">OPG050</name>
    <name type="ORF">MPXVgp038</name>
</gene>
<sequence length="75" mass="8821">MSKILTFVKNKIIDLINNDHQIKYSRVMMIEESDSLLPVDEVHVNHGFDCVEMIDENISNENIEQYKTESFFTIN</sequence>
<feature type="chain" id="PRO_0000457634" description="Protein OPG050">
    <location>
        <begin position="1"/>
        <end position="75"/>
    </location>
</feature>
<keyword id="KW-0244">Early protein</keyword>
<keyword id="KW-1185">Reference proteome</keyword>
<proteinExistence type="inferred from homology"/>